<dbReference type="EC" id="4.1.2.55" evidence="2"/>
<dbReference type="EMBL" id="AE006641">
    <property type="protein sequence ID" value="AAK43294.1"/>
    <property type="molecule type" value="Genomic_DNA"/>
</dbReference>
<dbReference type="PIR" id="G90504">
    <property type="entry name" value="G90504"/>
</dbReference>
<dbReference type="SMR" id="Q97U28"/>
<dbReference type="FunCoup" id="Q97U28">
    <property type="interactions" value="127"/>
</dbReference>
<dbReference type="STRING" id="273057.SSO3197"/>
<dbReference type="PaxDb" id="273057-SSO3197"/>
<dbReference type="EnsemblBacteria" id="AAK43294">
    <property type="protein sequence ID" value="AAK43294"/>
    <property type="gene ID" value="SSO3197"/>
</dbReference>
<dbReference type="KEGG" id="sso:SSO3197"/>
<dbReference type="PATRIC" id="fig|273057.12.peg.3300"/>
<dbReference type="eggNOG" id="arCOG04172">
    <property type="taxonomic scope" value="Archaea"/>
</dbReference>
<dbReference type="HOGENOM" id="CLU_049343_5_1_2"/>
<dbReference type="InParanoid" id="Q97U28"/>
<dbReference type="PhylomeDB" id="Q97U28"/>
<dbReference type="BRENDA" id="4.1.2.55">
    <property type="organism ID" value="6163"/>
</dbReference>
<dbReference type="UniPathway" id="UPA00856">
    <property type="reaction ID" value="UER00829"/>
</dbReference>
<dbReference type="Proteomes" id="UP000001974">
    <property type="component" value="Chromosome"/>
</dbReference>
<dbReference type="GO" id="GO:0008674">
    <property type="term" value="F:2-dehydro-3-deoxy-6-phosphogalactonate aldolase activity"/>
    <property type="evidence" value="ECO:0000314"/>
    <property type="project" value="UniProtKB"/>
</dbReference>
<dbReference type="GO" id="GO:0008675">
    <property type="term" value="F:2-dehydro-3-deoxy-phosphogluconate aldolase activity"/>
    <property type="evidence" value="ECO:0000314"/>
    <property type="project" value="UniProtKB"/>
</dbReference>
<dbReference type="GO" id="GO:0008840">
    <property type="term" value="F:4-hydroxy-tetrahydrodipicolinate synthase activity"/>
    <property type="evidence" value="ECO:0000318"/>
    <property type="project" value="GO_Central"/>
</dbReference>
<dbReference type="CDD" id="cd00953">
    <property type="entry name" value="KDG_aldolase"/>
    <property type="match status" value="1"/>
</dbReference>
<dbReference type="FunFam" id="3.20.20.70:FF:000289">
    <property type="entry name" value="2-dehydro-3-deoxy-phosphogluconate/2-dehydro-3-deoxy-6-phosphogalactonate aldolase"/>
    <property type="match status" value="1"/>
</dbReference>
<dbReference type="Gene3D" id="3.20.20.70">
    <property type="entry name" value="Aldolase class I"/>
    <property type="match status" value="1"/>
</dbReference>
<dbReference type="InterPro" id="IPR013785">
    <property type="entry name" value="Aldolase_TIM"/>
</dbReference>
<dbReference type="InterPro" id="IPR002220">
    <property type="entry name" value="DapA-like"/>
</dbReference>
<dbReference type="InterPro" id="IPR053415">
    <property type="entry name" value="ED_pathway_aldolase"/>
</dbReference>
<dbReference type="NCBIfam" id="NF040954">
    <property type="entry name" value="Arch_KDGaldase"/>
    <property type="match status" value="1"/>
</dbReference>
<dbReference type="PANTHER" id="PTHR12128:SF66">
    <property type="entry name" value="4-HYDROXY-2-OXOGLUTARATE ALDOLASE, MITOCHONDRIAL"/>
    <property type="match status" value="1"/>
</dbReference>
<dbReference type="PANTHER" id="PTHR12128">
    <property type="entry name" value="DIHYDRODIPICOLINATE SYNTHASE"/>
    <property type="match status" value="1"/>
</dbReference>
<dbReference type="Pfam" id="PF00701">
    <property type="entry name" value="DHDPS"/>
    <property type="match status" value="1"/>
</dbReference>
<dbReference type="PIRSF" id="PIRSF001365">
    <property type="entry name" value="DHDPS"/>
    <property type="match status" value="1"/>
</dbReference>
<dbReference type="PRINTS" id="PR00146">
    <property type="entry name" value="DHPICSNTHASE"/>
</dbReference>
<dbReference type="SMART" id="SM01130">
    <property type="entry name" value="DHDPS"/>
    <property type="match status" value="1"/>
</dbReference>
<dbReference type="SUPFAM" id="SSF51569">
    <property type="entry name" value="Aldolase"/>
    <property type="match status" value="1"/>
</dbReference>
<sequence>MGRQGNLEELWCLRMPEIITPIITPFTKDNRIDKEKLKIHAENLIRKGIDKLFVNGTTGLGPSLSPEEKLENLKAVYDVTNKIIFQVGGLNLDDAIRLAKLSKDFDIVGIASYAPYYYPRMSEKHLVKYFKTLCEVSPHPVYLYNYPTATGKDIDAKVAKEIGCFTGVKDTIENIIHTLDYKRLNPNMLVYSGSDMLIATVASTGLDGNVAAGSNYLPEVTVTIKKLAMERKIDEALKLQFLHDEVIEASRIFGSLSSNYVLTKYFQGYDLGYPRPPIFPLDDEEERQLIKKVEGIRAKLVELKILKE</sequence>
<keyword id="KW-0119">Carbohydrate metabolism</keyword>
<keyword id="KW-0456">Lyase</keyword>
<keyword id="KW-1185">Reference proteome</keyword>
<keyword id="KW-0704">Schiff base</keyword>
<comment type="function">
    <text evidence="2">Involved in the degradation of glucose and galactose via the Entner-Doudoroff pathway. Catalyzes the reversible cleavage of 2-keto-3-deoxy-6-phosphogluconate (KDPG) and 2-keto-3-deoxygluconate (KDG) forming pyruvate and glyceraldehyde 3-phosphate or glyceraldehyde, respectively. It is also able to catalyze the reversible cleavage of 2-keto-3-deoxy-6-phosphogalactonate (KDPGal) and 2-keto-3-deoxygalactonate (KDGal).</text>
</comment>
<comment type="catalytic activity">
    <reaction evidence="2">
        <text>2-dehydro-3-deoxy-6-phospho-D-gluconate = D-glyceraldehyde 3-phosphate + pyruvate</text>
        <dbReference type="Rhea" id="RHEA:17089"/>
        <dbReference type="ChEBI" id="CHEBI:15361"/>
        <dbReference type="ChEBI" id="CHEBI:57569"/>
        <dbReference type="ChEBI" id="CHEBI:59776"/>
        <dbReference type="EC" id="4.1.2.55"/>
    </reaction>
</comment>
<comment type="catalytic activity">
    <reaction evidence="2">
        <text>2-dehydro-3-deoxy-6-phospho-D-galactonate = D-glyceraldehyde 3-phosphate + pyruvate</text>
        <dbReference type="Rhea" id="RHEA:24464"/>
        <dbReference type="ChEBI" id="CHEBI:15361"/>
        <dbReference type="ChEBI" id="CHEBI:58298"/>
        <dbReference type="ChEBI" id="CHEBI:59776"/>
        <dbReference type="EC" id="4.1.2.55"/>
    </reaction>
</comment>
<comment type="pathway">
    <text>Carbohydrate acid metabolism; 2-dehydro-3-deoxy-D-gluconate degradation; D-glyceraldehyde 3-phosphate and pyruvate from 2-dehydro-3-deoxy-D-gluconate: step 2/2.</text>
</comment>
<comment type="subunit">
    <text evidence="1">Homotetramer; dimer of dimers.</text>
</comment>
<comment type="similarity">
    <text evidence="3">Belongs to the DapA family. KDPG aldolase subfamily.</text>
</comment>
<protein>
    <recommendedName>
        <fullName>2-dehydro-3-deoxy-phosphogluconate/2-dehydro-3-deoxy-6-phosphogalactonate aldolase</fullName>
        <ecNumber evidence="2">4.1.2.55</ecNumber>
    </recommendedName>
</protein>
<reference key="1">
    <citation type="journal article" date="2001" name="Proc. Natl. Acad. Sci. U.S.A.">
        <title>The complete genome of the crenarchaeon Sulfolobus solfataricus P2.</title>
        <authorList>
            <person name="She Q."/>
            <person name="Singh R.K."/>
            <person name="Confalonieri F."/>
            <person name="Zivanovic Y."/>
            <person name="Allard G."/>
            <person name="Awayez M.J."/>
            <person name="Chan-Weiher C.C.-Y."/>
            <person name="Clausen I.G."/>
            <person name="Curtis B.A."/>
            <person name="De Moors A."/>
            <person name="Erauso G."/>
            <person name="Fletcher C."/>
            <person name="Gordon P.M.K."/>
            <person name="Heikamp-de Jong I."/>
            <person name="Jeffries A.C."/>
            <person name="Kozera C.J."/>
            <person name="Medina N."/>
            <person name="Peng X."/>
            <person name="Thi-Ngoc H.P."/>
            <person name="Redder P."/>
            <person name="Schenk M.E."/>
            <person name="Theriault C."/>
            <person name="Tolstrup N."/>
            <person name="Charlebois R.L."/>
            <person name="Doolittle W.F."/>
            <person name="Duguet M."/>
            <person name="Gaasterland T."/>
            <person name="Garrett R.A."/>
            <person name="Ragan M.A."/>
            <person name="Sensen C.W."/>
            <person name="Van der Oost J."/>
        </authorList>
    </citation>
    <scope>NUCLEOTIDE SEQUENCE [LARGE SCALE GENOMIC DNA]</scope>
    <source>
        <strain>ATCC 35092 / DSM 1617 / JCM 11322 / P2</strain>
    </source>
</reference>
<reference key="2">
    <citation type="journal article" date="2005" name="Biochem. J.">
        <title>The semi-phosphorylative Entner-Doudoroff pathway in hyperthermophilic archaea: a re-evaluation.</title>
        <authorList>
            <person name="Ahmed H."/>
            <person name="Ettema T.J."/>
            <person name="Tjaden B."/>
            <person name="Geerling A.C."/>
            <person name="van der Oost J."/>
            <person name="Siebers B."/>
        </authorList>
    </citation>
    <scope>FUNCTION</scope>
    <scope>CATALYTIC ACTIVITY</scope>
    <scope>SUBSTRATE SPECIFICITY</scope>
</reference>
<evidence type="ECO:0000250" key="1"/>
<evidence type="ECO:0000269" key="2">
    <source>
    </source>
</evidence>
<evidence type="ECO:0000305" key="3"/>
<proteinExistence type="evidence at protein level"/>
<organism>
    <name type="scientific">Saccharolobus solfataricus (strain ATCC 35092 / DSM 1617 / JCM 11322 / P2)</name>
    <name type="common">Sulfolobus solfataricus</name>
    <dbReference type="NCBI Taxonomy" id="273057"/>
    <lineage>
        <taxon>Archaea</taxon>
        <taxon>Thermoproteota</taxon>
        <taxon>Thermoprotei</taxon>
        <taxon>Sulfolobales</taxon>
        <taxon>Sulfolobaceae</taxon>
        <taxon>Saccharolobus</taxon>
    </lineage>
</organism>
<gene>
    <name type="primary">eda</name>
    <name type="ordered locus">SSO3197</name>
</gene>
<name>KDGA_SACS2</name>
<accession>Q97U28</accession>
<feature type="chain" id="PRO_0000422655" description="2-dehydro-3-deoxy-phosphogluconate/2-dehydro-3-deoxy-6-phosphogalactonate aldolase">
    <location>
        <begin position="1"/>
        <end position="308"/>
    </location>
</feature>
<feature type="active site" description="Schiff-base intermediate with substrate" evidence="1">
    <location>
        <position position="169"/>
    </location>
</feature>
<feature type="binding site" evidence="1">
    <location>
        <begin position="57"/>
        <end position="58"/>
    </location>
    <ligand>
        <name>substrate</name>
    </ligand>
</feature>
<feature type="binding site" evidence="1">
    <location>
        <begin position="144"/>
        <end position="146"/>
    </location>
    <ligand>
        <name>substrate</name>
    </ligand>
</feature>
<feature type="binding site" evidence="1">
    <location>
        <begin position="169"/>
        <end position="171"/>
    </location>
    <ligand>
        <name>substrate</name>
    </ligand>
</feature>
<feature type="site" description="Proton shuttle" evidence="1">
    <location>
        <position position="144"/>
    </location>
</feature>